<sequence length="1171" mass="130322">MENNLKTCPKEDGDFVSDKIKFKIEEEDDDGIPPDSLERMDFKSEQEDMKQTDSGGERAGLGGTGCSCKPPGKYLSAESEDDYGALFSQYSSTLYDVAMEAVTQSLLSSRNMSSRKKSPAWKHFFISPRDSTKAICMYCVKEFSRGKNEKDLSTSCLMRHVRRAHPTVLIQENGSVSAVSSFPSPSLLLPPQPADAGDLSTILSPIKLVQKVASKIPSPDRITEESVSVVSSEEISSDMSVSEKCGREEALVGSSPHLPALHYDEPAENLAEKSLPLPKSTSGSRRRSAVWKHFYLSPLDNSKAVCIHCMNEFSRGKNGKDLGTSCLIRHMWRAHRAIVLQENGGTGIPPLYSTPPTLLPSLLPPEGELSSVSSSPVKPVRESPSASSSPDRLTEDLQSHLNPGDGLMEDVAAFSSSDDIGEASASSPEKQQADGLSPRLFESGAIFQQNKKVMKRLKSEVWHHFSLAPMDSLKAECRYCGCAISRGKKGDVGTSCLMRHLYRRHPEVVGSQKGFLGASLANSPYATLASAESSSSKLTDLPTVVTKNNQVMFPVNSKKTSKLWNHFSICSADSTKVVCLHCGRTISRGKKPTNLGTSCLLRHLQRFHSNVLKTEVSETARPSSPDTRVPRGTELSGASSFDDTNEKFYDSHPVAKKITSLIAEMIALDLQPYSFVDNVGFNRLLEYLKPQYSLPAPSYFSRTAIPGMYDNVKQIIMSHLKEAESGVIHFTSGIWMSNQTREYLTLTAHWVSFESPARPRCDDHHCSALLDVSQVDCDYSGNSIQKQLECWWEAWVTSTGLQVGITVTDNASIGKTLNEGEHSSVQCFSHTVNLIVSEAIKSQRMVQNLLSLARKICERVHRSPKAKEKLAELQREYALPQHHLIQDVPSKWSTSFHMLERLIEQKRAINEMSVECNFRELISCDQWEVMQSVCRALKPFEAASREMSTQMSTLSQVIPMVHILNRKVEMLFEETMGIDTMLRSLKEAMVSRLSATLHDPRYVFATLLDPRYKASLFTEEEAEQYKQDLIRELELMNSTSEDVAASHRCDAGSPSKDSAAEENLWSLVAKVKKKDPREKLPEAMVLAYLEEEVLEHSCDPLTYWNLKKASWPGLSALAVRFLGCPPSIVPSEKLFNTPTENGSLGQSRLMMEHFEKLIFLKVNLPLIYFQY</sequence>
<name>ZBED4_HUMAN</name>
<evidence type="ECO:0000250" key="1">
    <source>
        <dbReference type="UniProtKB" id="Q80WQ9"/>
    </source>
</evidence>
<evidence type="ECO:0000255" key="2">
    <source>
        <dbReference type="PROSITE-ProRule" id="PRU00027"/>
    </source>
</evidence>
<evidence type="ECO:0000256" key="3">
    <source>
        <dbReference type="SAM" id="MobiDB-lite"/>
    </source>
</evidence>
<evidence type="ECO:0000269" key="4">
    <source>
    </source>
</evidence>
<evidence type="ECO:0000269" key="5">
    <source>
    </source>
</evidence>
<evidence type="ECO:0000269" key="6">
    <source>
    </source>
</evidence>
<evidence type="ECO:0000269" key="7">
    <source>
    </source>
</evidence>
<evidence type="ECO:0000269" key="8">
    <source>
    </source>
</evidence>
<evidence type="ECO:0000269" key="9">
    <source>
    </source>
</evidence>
<evidence type="ECO:0000305" key="10"/>
<evidence type="ECO:0007744" key="11">
    <source>
    </source>
</evidence>
<evidence type="ECO:0007744" key="12">
    <source>
    </source>
</evidence>
<organism>
    <name type="scientific">Homo sapiens</name>
    <name type="common">Human</name>
    <dbReference type="NCBI Taxonomy" id="9606"/>
    <lineage>
        <taxon>Eukaryota</taxon>
        <taxon>Metazoa</taxon>
        <taxon>Chordata</taxon>
        <taxon>Craniata</taxon>
        <taxon>Vertebrata</taxon>
        <taxon>Euteleostomi</taxon>
        <taxon>Mammalia</taxon>
        <taxon>Eutheria</taxon>
        <taxon>Euarchontoglires</taxon>
        <taxon>Primates</taxon>
        <taxon>Haplorrhini</taxon>
        <taxon>Catarrhini</taxon>
        <taxon>Hominidae</taxon>
        <taxon>Homo</taxon>
    </lineage>
</organism>
<reference key="1">
    <citation type="journal article" date="1998" name="DNA Res.">
        <title>Prediction of the coding sequences of unidentified human genes. X. The complete sequences of 100 new cDNA clones from brain which can code for large proteins in vitro.</title>
        <authorList>
            <person name="Ishikawa K."/>
            <person name="Nagase T."/>
            <person name="Suyama M."/>
            <person name="Miyajima N."/>
            <person name="Tanaka A."/>
            <person name="Kotani H."/>
            <person name="Nomura N."/>
            <person name="Ohara O."/>
        </authorList>
    </citation>
    <scope>NUCLEOTIDE SEQUENCE [LARGE SCALE MRNA]</scope>
    <scope>VARIANT VAL-420</scope>
    <source>
        <tissue>Brain</tissue>
    </source>
</reference>
<reference key="2">
    <citation type="journal article" date="2004" name="Genome Biol.">
        <title>A genome annotation-driven approach to cloning the human ORFeome.</title>
        <authorList>
            <person name="Collins J.E."/>
            <person name="Wright C.L."/>
            <person name="Edwards C.A."/>
            <person name="Davis M.P."/>
            <person name="Grinham J.A."/>
            <person name="Cole C.G."/>
            <person name="Goward M.E."/>
            <person name="Aguado B."/>
            <person name="Mallya M."/>
            <person name="Mokrab Y."/>
            <person name="Huckle E.J."/>
            <person name="Beare D.M."/>
            <person name="Dunham I."/>
        </authorList>
    </citation>
    <scope>NUCLEOTIDE SEQUENCE [LARGE SCALE MRNA]</scope>
    <scope>VARIANT VAL-420</scope>
</reference>
<reference key="3">
    <citation type="journal article" date="1999" name="Nature">
        <title>The DNA sequence of human chromosome 22.</title>
        <authorList>
            <person name="Dunham I."/>
            <person name="Hunt A.R."/>
            <person name="Collins J.E."/>
            <person name="Bruskiewich R."/>
            <person name="Beare D.M."/>
            <person name="Clamp M."/>
            <person name="Smink L.J."/>
            <person name="Ainscough R."/>
            <person name="Almeida J.P."/>
            <person name="Babbage A.K."/>
            <person name="Bagguley C."/>
            <person name="Bailey J."/>
            <person name="Barlow K.F."/>
            <person name="Bates K.N."/>
            <person name="Beasley O.P."/>
            <person name="Bird C.P."/>
            <person name="Blakey S.E."/>
            <person name="Bridgeman A.M."/>
            <person name="Buck D."/>
            <person name="Burgess J."/>
            <person name="Burrill W.D."/>
            <person name="Burton J."/>
            <person name="Carder C."/>
            <person name="Carter N.P."/>
            <person name="Chen Y."/>
            <person name="Clark G."/>
            <person name="Clegg S.M."/>
            <person name="Cobley V.E."/>
            <person name="Cole C.G."/>
            <person name="Collier R.E."/>
            <person name="Connor R."/>
            <person name="Conroy D."/>
            <person name="Corby N.R."/>
            <person name="Coville G.J."/>
            <person name="Cox A.V."/>
            <person name="Davis J."/>
            <person name="Dawson E."/>
            <person name="Dhami P.D."/>
            <person name="Dockree C."/>
            <person name="Dodsworth S.J."/>
            <person name="Durbin R.M."/>
            <person name="Ellington A.G."/>
            <person name="Evans K.L."/>
            <person name="Fey J.M."/>
            <person name="Fleming K."/>
            <person name="French L."/>
            <person name="Garner A.A."/>
            <person name="Gilbert J.G.R."/>
            <person name="Goward M.E."/>
            <person name="Grafham D.V."/>
            <person name="Griffiths M.N.D."/>
            <person name="Hall C."/>
            <person name="Hall R.E."/>
            <person name="Hall-Tamlyn G."/>
            <person name="Heathcott R.W."/>
            <person name="Ho S."/>
            <person name="Holmes S."/>
            <person name="Hunt S.E."/>
            <person name="Jones M.C."/>
            <person name="Kershaw J."/>
            <person name="Kimberley A.M."/>
            <person name="King A."/>
            <person name="Laird G.K."/>
            <person name="Langford C.F."/>
            <person name="Leversha M.A."/>
            <person name="Lloyd C."/>
            <person name="Lloyd D.M."/>
            <person name="Martyn I.D."/>
            <person name="Mashreghi-Mohammadi M."/>
            <person name="Matthews L.H."/>
            <person name="Mccann O.T."/>
            <person name="Mcclay J."/>
            <person name="Mclaren S."/>
            <person name="McMurray A.A."/>
            <person name="Milne S.A."/>
            <person name="Mortimore B.J."/>
            <person name="Odell C.N."/>
            <person name="Pavitt R."/>
            <person name="Pearce A.V."/>
            <person name="Pearson D."/>
            <person name="Phillimore B.J.C.T."/>
            <person name="Phillips S.H."/>
            <person name="Plumb R.W."/>
            <person name="Ramsay H."/>
            <person name="Ramsey Y."/>
            <person name="Rogers L."/>
            <person name="Ross M.T."/>
            <person name="Scott C.E."/>
            <person name="Sehra H.K."/>
            <person name="Skuce C.D."/>
            <person name="Smalley S."/>
            <person name="Smith M.L."/>
            <person name="Soderlund C."/>
            <person name="Spragon L."/>
            <person name="Steward C.A."/>
            <person name="Sulston J.E."/>
            <person name="Swann R.M."/>
            <person name="Vaudin M."/>
            <person name="Wall M."/>
            <person name="Wallis J.M."/>
            <person name="Whiteley M.N."/>
            <person name="Willey D.L."/>
            <person name="Williams L."/>
            <person name="Williams S.A."/>
            <person name="Williamson H."/>
            <person name="Wilmer T.E."/>
            <person name="Wilming L."/>
            <person name="Wright C.L."/>
            <person name="Hubbard T."/>
            <person name="Bentley D.R."/>
            <person name="Beck S."/>
            <person name="Rogers J."/>
            <person name="Shimizu N."/>
            <person name="Minoshima S."/>
            <person name="Kawasaki K."/>
            <person name="Sasaki T."/>
            <person name="Asakawa S."/>
            <person name="Kudoh J."/>
            <person name="Shintani A."/>
            <person name="Shibuya K."/>
            <person name="Yoshizaki Y."/>
            <person name="Aoki N."/>
            <person name="Mitsuyama S."/>
            <person name="Roe B.A."/>
            <person name="Chen F."/>
            <person name="Chu L."/>
            <person name="Crabtree J."/>
            <person name="Deschamps S."/>
            <person name="Do A."/>
            <person name="Do T."/>
            <person name="Dorman A."/>
            <person name="Fang F."/>
            <person name="Fu Y."/>
            <person name="Hu P."/>
            <person name="Hua A."/>
            <person name="Kenton S."/>
            <person name="Lai H."/>
            <person name="Lao H.I."/>
            <person name="Lewis J."/>
            <person name="Lewis S."/>
            <person name="Lin S.-P."/>
            <person name="Loh P."/>
            <person name="Malaj E."/>
            <person name="Nguyen T."/>
            <person name="Pan H."/>
            <person name="Phan S."/>
            <person name="Qi S."/>
            <person name="Qian Y."/>
            <person name="Ray L."/>
            <person name="Ren Q."/>
            <person name="Shaull S."/>
            <person name="Sloan D."/>
            <person name="Song L."/>
            <person name="Wang Q."/>
            <person name="Wang Y."/>
            <person name="Wang Z."/>
            <person name="White J."/>
            <person name="Willingham D."/>
            <person name="Wu H."/>
            <person name="Yao Z."/>
            <person name="Zhan M."/>
            <person name="Zhang G."/>
            <person name="Chissoe S."/>
            <person name="Murray J."/>
            <person name="Miller N."/>
            <person name="Minx P."/>
            <person name="Fulton R."/>
            <person name="Johnson D."/>
            <person name="Bemis G."/>
            <person name="Bentley D."/>
            <person name="Bradshaw H."/>
            <person name="Bourne S."/>
            <person name="Cordes M."/>
            <person name="Du Z."/>
            <person name="Fulton L."/>
            <person name="Goela D."/>
            <person name="Graves T."/>
            <person name="Hawkins J."/>
            <person name="Hinds K."/>
            <person name="Kemp K."/>
            <person name="Latreille P."/>
            <person name="Layman D."/>
            <person name="Ozersky P."/>
            <person name="Rohlfing T."/>
            <person name="Scheet P."/>
            <person name="Walker C."/>
            <person name="Wamsley A."/>
            <person name="Wohldmann P."/>
            <person name="Pepin K."/>
            <person name="Nelson J."/>
            <person name="Korf I."/>
            <person name="Bedell J.A."/>
            <person name="Hillier L.W."/>
            <person name="Mardis E."/>
            <person name="Waterston R."/>
            <person name="Wilson R."/>
            <person name="Emanuel B.S."/>
            <person name="Shaikh T."/>
            <person name="Kurahashi H."/>
            <person name="Saitta S."/>
            <person name="Budarf M.L."/>
            <person name="McDermid H.E."/>
            <person name="Johnson A."/>
            <person name="Wong A.C.C."/>
            <person name="Morrow B.E."/>
            <person name="Edelmann L."/>
            <person name="Kim U.J."/>
            <person name="Shizuya H."/>
            <person name="Simon M.I."/>
            <person name="Dumanski J.P."/>
            <person name="Peyrard M."/>
            <person name="Kedra D."/>
            <person name="Seroussi E."/>
            <person name="Fransson I."/>
            <person name="Tapia I."/>
            <person name="Bruder C.E."/>
            <person name="O'Brien K.P."/>
            <person name="Wilkinson P."/>
            <person name="Bodenteich A."/>
            <person name="Hartman K."/>
            <person name="Hu X."/>
            <person name="Khan A.S."/>
            <person name="Lane L."/>
            <person name="Tilahun Y."/>
            <person name="Wright H."/>
        </authorList>
    </citation>
    <scope>NUCLEOTIDE SEQUENCE [LARGE SCALE GENOMIC DNA]</scope>
</reference>
<reference key="4">
    <citation type="journal article" date="2004" name="Genome Res.">
        <title>The status, quality, and expansion of the NIH full-length cDNA project: the Mammalian Gene Collection (MGC).</title>
        <authorList>
            <consortium name="The MGC Project Team"/>
        </authorList>
    </citation>
    <scope>NUCLEOTIDE SEQUENCE [LARGE SCALE MRNA]</scope>
    <scope>VARIANT VAL-420</scope>
</reference>
<reference key="5">
    <citation type="journal article" date="2007" name="J. Biol. Chem.">
        <title>Human DNA replication-related element binding factor (hDREF) self-association via hATC domain is necessary for its nuclear accumulation and DNA binding.</title>
        <authorList>
            <person name="Yamashita D."/>
            <person name="Komori H."/>
            <person name="Higuchi Y."/>
            <person name="Yamaguchi T."/>
            <person name="Osumi T."/>
            <person name="Hirose F."/>
        </authorList>
    </citation>
    <scope>SUBUNIT</scope>
    <scope>SUBCELLULAR LOCATION</scope>
</reference>
<reference key="6">
    <citation type="journal article" date="2009" name="Invest. Ophthalmol. Vis. Sci.">
        <title>ZBED4, a BED-type zinc-finger protein in the cones of the human retina.</title>
        <authorList>
            <person name="Saghizadeh M."/>
            <person name="Akhmedov N.B."/>
            <person name="Yamashita C.K."/>
            <person name="Gribanova Y."/>
            <person name="Theendakara V."/>
            <person name="Mendoza E."/>
            <person name="Nelson S.F."/>
            <person name="Ljubimov A.V."/>
            <person name="Farber D.B."/>
        </authorList>
    </citation>
    <scope>SUBCELLULAR LOCATION</scope>
    <scope>TISSUE SPECIFICITY</scope>
</reference>
<reference key="7">
    <citation type="journal article" date="2012" name="PLoS ONE">
        <title>Sequence-specific binding of recombinant Zbed4 to DNA: insights into Zbed4 participation in gene transcription and its association with other proteins.</title>
        <authorList>
            <person name="Mokhonov V.V."/>
            <person name="Theendakara V.P."/>
            <person name="Gribanova Y.E."/>
            <person name="Ahmedli N.B."/>
            <person name="Farber D.B."/>
        </authorList>
    </citation>
    <scope>INTERACTION WITH MYH9 AND SAFB</scope>
    <scope>SUBCELLULAR LOCATION</scope>
</reference>
<reference key="8">
    <citation type="journal article" date="2013" name="J. Proteome Res.">
        <title>Toward a comprehensive characterization of a human cancer cell phosphoproteome.</title>
        <authorList>
            <person name="Zhou H."/>
            <person name="Di Palma S."/>
            <person name="Preisinger C."/>
            <person name="Peng M."/>
            <person name="Polat A.N."/>
            <person name="Heck A.J."/>
            <person name="Mohammed S."/>
        </authorList>
    </citation>
    <scope>PHOSPHORYLATION [LARGE SCALE ANALYSIS] AT SER-624</scope>
    <scope>IDENTIFICATION BY MASS SPECTROMETRY [LARGE SCALE ANALYSIS]</scope>
    <source>
        <tissue>Cervix carcinoma</tissue>
        <tissue>Erythroleukemia</tissue>
    </source>
</reference>
<reference key="9">
    <citation type="journal article" date="2017" name="Nat. Struct. Mol. Biol.">
        <title>Site-specific mapping of the human SUMO proteome reveals co-modification with phosphorylation.</title>
        <authorList>
            <person name="Hendriks I.A."/>
            <person name="Lyon D."/>
            <person name="Young C."/>
            <person name="Jensen L.J."/>
            <person name="Vertegaal A.C."/>
            <person name="Nielsen M.L."/>
        </authorList>
    </citation>
    <scope>SUMOYLATION [LARGE SCALE ANALYSIS] AT LYS-43 AND LYS-489</scope>
    <scope>IDENTIFICATION BY MASS SPECTROMETRY [LARGE SCALE ANALYSIS]</scope>
</reference>
<feature type="chain" id="PRO_0000066563" description="Zinc finger BED domain-containing protein 4">
    <location>
        <begin position="1"/>
        <end position="1171"/>
    </location>
</feature>
<feature type="zinc finger region" description="BED-type 1" evidence="2">
    <location>
        <begin position="115"/>
        <end position="172"/>
    </location>
</feature>
<feature type="zinc finger region" description="BED-type 2" evidence="2">
    <location>
        <begin position="285"/>
        <end position="342"/>
    </location>
</feature>
<feature type="zinc finger region" description="BED-type 3" evidence="2">
    <location>
        <begin position="456"/>
        <end position="512"/>
    </location>
</feature>
<feature type="zinc finger region" description="BED-type 4" evidence="2">
    <location>
        <begin position="558"/>
        <end position="615"/>
    </location>
</feature>
<feature type="region of interest" description="Disordered" evidence="3">
    <location>
        <begin position="25"/>
        <end position="62"/>
    </location>
</feature>
<feature type="region of interest" description="Disordered" evidence="3">
    <location>
        <begin position="362"/>
        <end position="405"/>
    </location>
</feature>
<feature type="region of interest" description="Disordered" evidence="3">
    <location>
        <begin position="614"/>
        <end position="640"/>
    </location>
</feature>
<feature type="region of interest" description="Required for homodimerization and nuclear accumulation" evidence="6">
    <location>
        <begin position="1086"/>
        <end position="1171"/>
    </location>
</feature>
<feature type="compositionally biased region" description="Basic and acidic residues" evidence="3">
    <location>
        <begin position="36"/>
        <end position="51"/>
    </location>
</feature>
<feature type="compositionally biased region" description="Low complexity" evidence="3">
    <location>
        <begin position="362"/>
        <end position="385"/>
    </location>
</feature>
<feature type="binding site" evidence="2">
    <location>
        <position position="136"/>
    </location>
    <ligand>
        <name>Zn(2+)</name>
        <dbReference type="ChEBI" id="CHEBI:29105"/>
        <label>1</label>
    </ligand>
</feature>
<feature type="binding site" evidence="2">
    <location>
        <position position="139"/>
    </location>
    <ligand>
        <name>Zn(2+)</name>
        <dbReference type="ChEBI" id="CHEBI:29105"/>
        <label>1</label>
    </ligand>
</feature>
<feature type="binding site" evidence="2">
    <location>
        <position position="160"/>
    </location>
    <ligand>
        <name>Zn(2+)</name>
        <dbReference type="ChEBI" id="CHEBI:29105"/>
        <label>1</label>
    </ligand>
</feature>
<feature type="binding site" evidence="2">
    <location>
        <position position="165"/>
    </location>
    <ligand>
        <name>Zn(2+)</name>
        <dbReference type="ChEBI" id="CHEBI:29105"/>
        <label>1</label>
    </ligand>
</feature>
<feature type="binding site" evidence="2">
    <location>
        <position position="306"/>
    </location>
    <ligand>
        <name>Zn(2+)</name>
        <dbReference type="ChEBI" id="CHEBI:29105"/>
        <label>2</label>
    </ligand>
</feature>
<feature type="binding site" evidence="2">
    <location>
        <position position="309"/>
    </location>
    <ligand>
        <name>Zn(2+)</name>
        <dbReference type="ChEBI" id="CHEBI:29105"/>
        <label>2</label>
    </ligand>
</feature>
<feature type="binding site" evidence="2">
    <location>
        <position position="330"/>
    </location>
    <ligand>
        <name>Zn(2+)</name>
        <dbReference type="ChEBI" id="CHEBI:29105"/>
        <label>2</label>
    </ligand>
</feature>
<feature type="binding site" evidence="2">
    <location>
        <position position="335"/>
    </location>
    <ligand>
        <name>Zn(2+)</name>
        <dbReference type="ChEBI" id="CHEBI:29105"/>
        <label>2</label>
    </ligand>
</feature>
<feature type="binding site" evidence="2">
    <location>
        <position position="477"/>
    </location>
    <ligand>
        <name>Zn(2+)</name>
        <dbReference type="ChEBI" id="CHEBI:29105"/>
        <label>3</label>
    </ligand>
</feature>
<feature type="binding site" evidence="2">
    <location>
        <position position="480"/>
    </location>
    <ligand>
        <name>Zn(2+)</name>
        <dbReference type="ChEBI" id="CHEBI:29105"/>
        <label>3</label>
    </ligand>
</feature>
<feature type="binding site" evidence="2">
    <location>
        <position position="500"/>
    </location>
    <ligand>
        <name>Zn(2+)</name>
        <dbReference type="ChEBI" id="CHEBI:29105"/>
        <label>3</label>
    </ligand>
</feature>
<feature type="binding site" evidence="2">
    <location>
        <position position="505"/>
    </location>
    <ligand>
        <name>Zn(2+)</name>
        <dbReference type="ChEBI" id="CHEBI:29105"/>
        <label>3</label>
    </ligand>
</feature>
<feature type="binding site" evidence="2">
    <location>
        <position position="579"/>
    </location>
    <ligand>
        <name>Zn(2+)</name>
        <dbReference type="ChEBI" id="CHEBI:29105"/>
        <label>4</label>
    </ligand>
</feature>
<feature type="binding site" evidence="2">
    <location>
        <position position="582"/>
    </location>
    <ligand>
        <name>Zn(2+)</name>
        <dbReference type="ChEBI" id="CHEBI:29105"/>
        <label>4</label>
    </ligand>
</feature>
<feature type="binding site" evidence="2">
    <location>
        <position position="603"/>
    </location>
    <ligand>
        <name>Zn(2+)</name>
        <dbReference type="ChEBI" id="CHEBI:29105"/>
        <label>4</label>
    </ligand>
</feature>
<feature type="binding site" evidence="2">
    <location>
        <position position="608"/>
    </location>
    <ligand>
        <name>Zn(2+)</name>
        <dbReference type="ChEBI" id="CHEBI:29105"/>
        <label>4</label>
    </ligand>
</feature>
<feature type="modified residue" description="Phosphoserine" evidence="11">
    <location>
        <position position="624"/>
    </location>
</feature>
<feature type="cross-link" description="Glycyl lysine isopeptide (Lys-Gly) (interchain with G-Cter in SUMO2)" evidence="12">
    <location>
        <position position="43"/>
    </location>
</feature>
<feature type="cross-link" description="Glycyl lysine isopeptide (Lys-Gly) (interchain with G-Cter in SUMO2)" evidence="12">
    <location>
        <position position="489"/>
    </location>
</feature>
<feature type="sequence variant" id="VAR_027809" description="In dbSNP:rs910799." evidence="4 5 9">
    <original>I</original>
    <variation>V</variation>
    <location>
        <position position="420"/>
    </location>
</feature>
<feature type="sequence conflict" description="In Ref. 4; AAI17671." evidence="10" ref="4">
    <original>R</original>
    <variation>Q</variation>
    <location>
        <position position="584"/>
    </location>
</feature>
<accession>O75132</accession>
<accession>B2RZH1</accession>
<accession>Q1ECU0</accession>
<accession>Q9UGG8</accession>
<keyword id="KW-0010">Activator</keyword>
<keyword id="KW-0963">Cytoplasm</keyword>
<keyword id="KW-0238">DNA-binding</keyword>
<keyword id="KW-1017">Isopeptide bond</keyword>
<keyword id="KW-0479">Metal-binding</keyword>
<keyword id="KW-0539">Nucleus</keyword>
<keyword id="KW-0597">Phosphoprotein</keyword>
<keyword id="KW-1267">Proteomics identification</keyword>
<keyword id="KW-1185">Reference proteome</keyword>
<keyword id="KW-0677">Repeat</keyword>
<keyword id="KW-0694">RNA-binding</keyword>
<keyword id="KW-0804">Transcription</keyword>
<keyword id="KW-0805">Transcription regulation</keyword>
<keyword id="KW-0832">Ubl conjugation</keyword>
<keyword id="KW-0862">Zinc</keyword>
<keyword id="KW-0863">Zinc-finger</keyword>
<comment type="function">
    <text evidence="1">Transcriptional regulator that binds to poly-guanine tracts in gene promoters and activates transcription (By similarity). Able to bind single- and double-stranded DNA and RNA (By similarity).</text>
</comment>
<comment type="subunit">
    <text evidence="6 8">Homodimer; via C-terminus (PubMed:17209048). Interacts with MYH9 (PubMed:22693546). Interacts with SAFB/SAFB1 (PubMed:22693546).</text>
</comment>
<comment type="interaction">
    <interactant intactId="EBI-2860059">
        <id>O75132</id>
    </interactant>
    <interactant intactId="EBI-748397">
        <id>P50222</id>
        <label>MEOX2</label>
    </interactant>
    <organismsDiffer>false</organismsDiffer>
    <experiments>3</experiments>
</comment>
<comment type="subcellular location">
    <subcellularLocation>
        <location evidence="6 7 8">Nucleus</location>
    </subcellularLocation>
    <subcellularLocation>
        <location evidence="6 8">Cytoplasm</location>
    </subcellularLocation>
    <subcellularLocation>
        <location evidence="7">Photoreceptor inner segment</location>
    </subcellularLocation>
</comment>
<comment type="tissue specificity">
    <text evidence="7">Expressed in testis, heart, lung, and weakly expressed in brain, liver, muscle, placenta and small intestine (PubMed:19369242). Expressed in the retina, found in the cone photoreceptors, Mueller cells, cone pedicles and in the innermost retinal layer (PubMed:19369242).</text>
</comment>
<comment type="sequence caution" evidence="10">
    <conflict type="erroneous initiation">
        <sequence resource="EMBL-CDS" id="BAA31612"/>
    </conflict>
    <text>Extended N-terminus.</text>
</comment>
<dbReference type="EMBL" id="AB014537">
    <property type="protein sequence ID" value="BAA31612.2"/>
    <property type="status" value="ALT_INIT"/>
    <property type="molecule type" value="mRNA"/>
</dbReference>
<dbReference type="EMBL" id="CR456387">
    <property type="protein sequence ID" value="CAG30273.1"/>
    <property type="molecule type" value="mRNA"/>
</dbReference>
<dbReference type="EMBL" id="AL117328">
    <property type="status" value="NOT_ANNOTATED_CDS"/>
    <property type="molecule type" value="Genomic_DNA"/>
</dbReference>
<dbReference type="EMBL" id="BC117670">
    <property type="protein sequence ID" value="AAI17671.1"/>
    <property type="molecule type" value="mRNA"/>
</dbReference>
<dbReference type="EMBL" id="BC167155">
    <property type="protein sequence ID" value="AAI67155.1"/>
    <property type="molecule type" value="mRNA"/>
</dbReference>
<dbReference type="CCDS" id="CCDS33677.1"/>
<dbReference type="PIR" id="T00380">
    <property type="entry name" value="T00380"/>
</dbReference>
<dbReference type="RefSeq" id="NP_055653.2">
    <property type="nucleotide sequence ID" value="NM_014838.3"/>
</dbReference>
<dbReference type="RefSeq" id="XP_024308080.1">
    <property type="nucleotide sequence ID" value="XM_024452312.2"/>
</dbReference>
<dbReference type="RefSeq" id="XP_047297640.1">
    <property type="nucleotide sequence ID" value="XM_047441684.1"/>
</dbReference>
<dbReference type="RefSeq" id="XP_047297641.1">
    <property type="nucleotide sequence ID" value="XM_047441685.1"/>
</dbReference>
<dbReference type="RefSeq" id="XP_047297642.1">
    <property type="nucleotide sequence ID" value="XM_047441686.1"/>
</dbReference>
<dbReference type="SMR" id="O75132"/>
<dbReference type="BioGRID" id="115219">
    <property type="interactions" value="32"/>
</dbReference>
<dbReference type="FunCoup" id="O75132">
    <property type="interactions" value="3278"/>
</dbReference>
<dbReference type="IntAct" id="O75132">
    <property type="interactions" value="25"/>
</dbReference>
<dbReference type="MINT" id="O75132"/>
<dbReference type="STRING" id="9606.ENSP00000216268"/>
<dbReference type="GlyGen" id="O75132">
    <property type="glycosylation" value="2 sites, 1 O-linked glycan (2 sites)"/>
</dbReference>
<dbReference type="iPTMnet" id="O75132"/>
<dbReference type="PhosphoSitePlus" id="O75132"/>
<dbReference type="BioMuta" id="ZBED4"/>
<dbReference type="jPOST" id="O75132"/>
<dbReference type="MassIVE" id="O75132"/>
<dbReference type="PaxDb" id="9606-ENSP00000216268"/>
<dbReference type="PeptideAtlas" id="O75132"/>
<dbReference type="ProteomicsDB" id="49794"/>
<dbReference type="Pumba" id="O75132"/>
<dbReference type="Antibodypedia" id="59180">
    <property type="antibodies" value="7 antibodies from 6 providers"/>
</dbReference>
<dbReference type="DNASU" id="9889"/>
<dbReference type="Ensembl" id="ENST00000216268.6">
    <property type="protein sequence ID" value="ENSP00000216268.4"/>
    <property type="gene ID" value="ENSG00000100426.8"/>
</dbReference>
<dbReference type="Ensembl" id="ENST00000850559.1">
    <property type="protein sequence ID" value="ENSP00000520851.1"/>
    <property type="gene ID" value="ENSG00000100426.8"/>
</dbReference>
<dbReference type="GeneID" id="9889"/>
<dbReference type="KEGG" id="hsa:9889"/>
<dbReference type="MANE-Select" id="ENST00000216268.6">
    <property type="protein sequence ID" value="ENSP00000216268.4"/>
    <property type="RefSeq nucleotide sequence ID" value="NM_014838.3"/>
    <property type="RefSeq protein sequence ID" value="NP_055653.2"/>
</dbReference>
<dbReference type="UCSC" id="uc003bix.3">
    <property type="organism name" value="human"/>
</dbReference>
<dbReference type="AGR" id="HGNC:20721"/>
<dbReference type="CTD" id="9889"/>
<dbReference type="DisGeNET" id="9889"/>
<dbReference type="GeneCards" id="ZBED4"/>
<dbReference type="HGNC" id="HGNC:20721">
    <property type="gene designation" value="ZBED4"/>
</dbReference>
<dbReference type="HPA" id="ENSG00000100426">
    <property type="expression patterns" value="Low tissue specificity"/>
</dbReference>
<dbReference type="MalaCards" id="ZBED4"/>
<dbReference type="MIM" id="612552">
    <property type="type" value="gene"/>
</dbReference>
<dbReference type="neXtProt" id="NX_O75132"/>
<dbReference type="OpenTargets" id="ENSG00000100426"/>
<dbReference type="PharmGKB" id="PA134948378"/>
<dbReference type="VEuPathDB" id="HostDB:ENSG00000100426"/>
<dbReference type="eggNOG" id="KOG1121">
    <property type="taxonomic scope" value="Eukaryota"/>
</dbReference>
<dbReference type="GeneTree" id="ENSGT00940000161365"/>
<dbReference type="HOGENOM" id="CLU_006260_0_0_1"/>
<dbReference type="InParanoid" id="O75132"/>
<dbReference type="OMA" id="NEMSVEC"/>
<dbReference type="OrthoDB" id="10057873at2759"/>
<dbReference type="PAN-GO" id="O75132">
    <property type="GO annotations" value="0 GO annotations based on evolutionary models"/>
</dbReference>
<dbReference type="PhylomeDB" id="O75132"/>
<dbReference type="TreeFam" id="TF322818"/>
<dbReference type="PathwayCommons" id="O75132"/>
<dbReference type="SignaLink" id="O75132"/>
<dbReference type="BioGRID-ORCS" id="9889">
    <property type="hits" value="16 hits in 1179 CRISPR screens"/>
</dbReference>
<dbReference type="ChiTaRS" id="ZBED4">
    <property type="organism name" value="human"/>
</dbReference>
<dbReference type="GenomeRNAi" id="9889"/>
<dbReference type="Pharos" id="O75132">
    <property type="development level" value="Tdark"/>
</dbReference>
<dbReference type="PRO" id="PR:O75132"/>
<dbReference type="Proteomes" id="UP000005640">
    <property type="component" value="Chromosome 22"/>
</dbReference>
<dbReference type="RNAct" id="O75132">
    <property type="molecule type" value="protein"/>
</dbReference>
<dbReference type="Bgee" id="ENSG00000100426">
    <property type="expression patterns" value="Expressed in ganglionic eminence and 133 other cell types or tissues"/>
</dbReference>
<dbReference type="GO" id="GO:0000785">
    <property type="term" value="C:chromatin"/>
    <property type="evidence" value="ECO:0000247"/>
    <property type="project" value="NTNU_SB"/>
</dbReference>
<dbReference type="GO" id="GO:0005737">
    <property type="term" value="C:cytoplasm"/>
    <property type="evidence" value="ECO:0000314"/>
    <property type="project" value="UniProtKB"/>
</dbReference>
<dbReference type="GO" id="GO:0005654">
    <property type="term" value="C:nucleoplasm"/>
    <property type="evidence" value="ECO:0000314"/>
    <property type="project" value="HPA"/>
</dbReference>
<dbReference type="GO" id="GO:0005634">
    <property type="term" value="C:nucleus"/>
    <property type="evidence" value="ECO:0000314"/>
    <property type="project" value="UniProtKB"/>
</dbReference>
<dbReference type="GO" id="GO:0001917">
    <property type="term" value="C:photoreceptor inner segment"/>
    <property type="evidence" value="ECO:0007669"/>
    <property type="project" value="UniProtKB-SubCell"/>
</dbReference>
<dbReference type="GO" id="GO:0001228">
    <property type="term" value="F:DNA-binding transcription activator activity, RNA polymerase II-specific"/>
    <property type="evidence" value="ECO:0000250"/>
    <property type="project" value="ARUK-UCL"/>
</dbReference>
<dbReference type="GO" id="GO:0000981">
    <property type="term" value="F:DNA-binding transcription factor activity, RNA polymerase II-specific"/>
    <property type="evidence" value="ECO:0000247"/>
    <property type="project" value="NTNU_SB"/>
</dbReference>
<dbReference type="GO" id="GO:0042802">
    <property type="term" value="F:identical protein binding"/>
    <property type="evidence" value="ECO:0000353"/>
    <property type="project" value="UniProtKB"/>
</dbReference>
<dbReference type="GO" id="GO:0046983">
    <property type="term" value="F:protein dimerization activity"/>
    <property type="evidence" value="ECO:0007669"/>
    <property type="project" value="InterPro"/>
</dbReference>
<dbReference type="GO" id="GO:0003723">
    <property type="term" value="F:RNA binding"/>
    <property type="evidence" value="ECO:0000250"/>
    <property type="project" value="UniProtKB"/>
</dbReference>
<dbReference type="GO" id="GO:0000977">
    <property type="term" value="F:RNA polymerase II transcription regulatory region sequence-specific DNA binding"/>
    <property type="evidence" value="ECO:0000250"/>
    <property type="project" value="ARUK-UCL"/>
</dbReference>
<dbReference type="GO" id="GO:0000976">
    <property type="term" value="F:transcription cis-regulatory region binding"/>
    <property type="evidence" value="ECO:0000250"/>
    <property type="project" value="UniProtKB"/>
</dbReference>
<dbReference type="GO" id="GO:0008270">
    <property type="term" value="F:zinc ion binding"/>
    <property type="evidence" value="ECO:0007669"/>
    <property type="project" value="UniProtKB-KW"/>
</dbReference>
<dbReference type="GO" id="GO:0045944">
    <property type="term" value="P:positive regulation of transcription by RNA polymerase II"/>
    <property type="evidence" value="ECO:0000250"/>
    <property type="project" value="UniProtKB"/>
</dbReference>
<dbReference type="InterPro" id="IPR008906">
    <property type="entry name" value="HATC_C_dom"/>
</dbReference>
<dbReference type="InterPro" id="IPR012337">
    <property type="entry name" value="RNaseH-like_sf"/>
</dbReference>
<dbReference type="InterPro" id="IPR003656">
    <property type="entry name" value="Znf_BED"/>
</dbReference>
<dbReference type="InterPro" id="IPR052035">
    <property type="entry name" value="ZnF_BED_domain_contain"/>
</dbReference>
<dbReference type="InterPro" id="IPR036236">
    <property type="entry name" value="Znf_C2H2_sf"/>
</dbReference>
<dbReference type="PANTHER" id="PTHR46481">
    <property type="entry name" value="ZINC FINGER BED DOMAIN-CONTAINING PROTEIN 4"/>
    <property type="match status" value="1"/>
</dbReference>
<dbReference type="PANTHER" id="PTHR46481:SF4">
    <property type="entry name" value="ZINC FINGER BED DOMAIN-CONTAINING PROTEIN 4"/>
    <property type="match status" value="1"/>
</dbReference>
<dbReference type="Pfam" id="PF05699">
    <property type="entry name" value="Dimer_Tnp_hAT"/>
    <property type="match status" value="1"/>
</dbReference>
<dbReference type="Pfam" id="PF02892">
    <property type="entry name" value="zf-BED"/>
    <property type="match status" value="4"/>
</dbReference>
<dbReference type="SMART" id="SM00614">
    <property type="entry name" value="ZnF_BED"/>
    <property type="match status" value="4"/>
</dbReference>
<dbReference type="SUPFAM" id="SSF57667">
    <property type="entry name" value="beta-beta-alpha zinc fingers"/>
    <property type="match status" value="4"/>
</dbReference>
<dbReference type="SUPFAM" id="SSF140996">
    <property type="entry name" value="Hermes dimerisation domain"/>
    <property type="match status" value="1"/>
</dbReference>
<dbReference type="SUPFAM" id="SSF53098">
    <property type="entry name" value="Ribonuclease H-like"/>
    <property type="match status" value="1"/>
</dbReference>
<dbReference type="PROSITE" id="PS50808">
    <property type="entry name" value="ZF_BED"/>
    <property type="match status" value="4"/>
</dbReference>
<protein>
    <recommendedName>
        <fullName>Zinc finger BED domain-containing protein 4</fullName>
    </recommendedName>
</protein>
<gene>
    <name type="primary">ZBED4</name>
    <name type="synonym">KIAA0637</name>
</gene>
<proteinExistence type="evidence at protein level"/>